<protein>
    <recommendedName>
        <fullName evidence="2">Elongation factor Tu</fullName>
        <shortName evidence="2">EF-Tu</shortName>
        <ecNumber evidence="2">3.6.5.3</ecNumber>
    </recommendedName>
</protein>
<sequence length="396" mass="43944">MAKAKFERTKPHVNIGTIGHVDHGKTTTTAAITKVLADAYPELNEAFAFDAIDKAPEEKERGITINISHVEYQTEKRHYAHVDAPGHADYIKNMITGAAQMDGAILVVAATDGPMPQTREHVLLARQVGVPYILVALNKCDMVDDEEIIELVEMEIRELLAEQDYDEEAPIIHISALKALEGDEKWTQSIIDLMQACDDSIPDPERETDKPFLMPIEDIFTITGRGTVVTGRVERGSLKVNEDVEIIGIREKATTTTVTGIEMFRKLLDYTEAGDNCGLLLRGVKREDVERGQVVVKPGAYTPHTEFEGSVYVLSKDEGGRHTPFFDNYRPQFYFRTTDVTGVVKLPEGTEMVMPGDNVDMSVTLIQPVAMDEGLRFAIREGSRTVGAGRVTKIIK</sequence>
<name>EFTU_CORDI</name>
<reference key="1">
    <citation type="journal article" date="2003" name="Nucleic Acids Res.">
        <title>The complete genome sequence and analysis of Corynebacterium diphtheriae NCTC13129.</title>
        <authorList>
            <person name="Cerdeno-Tarraga A.-M."/>
            <person name="Efstratiou A."/>
            <person name="Dover L.G."/>
            <person name="Holden M.T.G."/>
            <person name="Pallen M.J."/>
            <person name="Bentley S.D."/>
            <person name="Besra G.S."/>
            <person name="Churcher C.M."/>
            <person name="James K.D."/>
            <person name="De Zoysa A."/>
            <person name="Chillingworth T."/>
            <person name="Cronin A."/>
            <person name="Dowd L."/>
            <person name="Feltwell T."/>
            <person name="Hamlin N."/>
            <person name="Holroyd S."/>
            <person name="Jagels K."/>
            <person name="Moule S."/>
            <person name="Quail M.A."/>
            <person name="Rabbinowitsch E."/>
            <person name="Rutherford K.M."/>
            <person name="Thomson N.R."/>
            <person name="Unwin L."/>
            <person name="Whitehead S."/>
            <person name="Barrell B.G."/>
            <person name="Parkhill J."/>
        </authorList>
    </citation>
    <scope>NUCLEOTIDE SEQUENCE [LARGE SCALE GENOMIC DNA]</scope>
    <source>
        <strain>ATCC 700971 / NCTC 13129 / Biotype gravis</strain>
    </source>
</reference>
<proteinExistence type="inferred from homology"/>
<keyword id="KW-0963">Cytoplasm</keyword>
<keyword id="KW-0251">Elongation factor</keyword>
<keyword id="KW-0342">GTP-binding</keyword>
<keyword id="KW-0378">Hydrolase</keyword>
<keyword id="KW-0460">Magnesium</keyword>
<keyword id="KW-0479">Metal-binding</keyword>
<keyword id="KW-0547">Nucleotide-binding</keyword>
<keyword id="KW-0648">Protein biosynthesis</keyword>
<keyword id="KW-1185">Reference proteome</keyword>
<accession>Q6NJD5</accession>
<comment type="function">
    <text evidence="2">GTP hydrolase that promotes the GTP-dependent binding of aminoacyl-tRNA to the A-site of ribosomes during protein biosynthesis.</text>
</comment>
<comment type="catalytic activity">
    <reaction evidence="2">
        <text>GTP + H2O = GDP + phosphate + H(+)</text>
        <dbReference type="Rhea" id="RHEA:19669"/>
        <dbReference type="ChEBI" id="CHEBI:15377"/>
        <dbReference type="ChEBI" id="CHEBI:15378"/>
        <dbReference type="ChEBI" id="CHEBI:37565"/>
        <dbReference type="ChEBI" id="CHEBI:43474"/>
        <dbReference type="ChEBI" id="CHEBI:58189"/>
        <dbReference type="EC" id="3.6.5.3"/>
    </reaction>
    <physiologicalReaction direction="left-to-right" evidence="2">
        <dbReference type="Rhea" id="RHEA:19670"/>
    </physiologicalReaction>
</comment>
<comment type="subunit">
    <text evidence="2">Monomer.</text>
</comment>
<comment type="subcellular location">
    <subcellularLocation>
        <location evidence="2">Cytoplasm</location>
    </subcellularLocation>
</comment>
<comment type="similarity">
    <text evidence="2">Belongs to the TRAFAC class translation factor GTPase superfamily. Classic translation factor GTPase family. EF-Tu/EF-1A subfamily.</text>
</comment>
<gene>
    <name evidence="2" type="primary">tuf</name>
    <name type="ordered locus">DIP0470</name>
</gene>
<feature type="chain" id="PRO_1000015641" description="Elongation factor Tu">
    <location>
        <begin position="1"/>
        <end position="396"/>
    </location>
</feature>
<feature type="domain" description="tr-type G">
    <location>
        <begin position="10"/>
        <end position="205"/>
    </location>
</feature>
<feature type="region of interest" description="G1" evidence="1">
    <location>
        <begin position="19"/>
        <end position="26"/>
    </location>
</feature>
<feature type="region of interest" description="G2" evidence="1">
    <location>
        <begin position="62"/>
        <end position="66"/>
    </location>
</feature>
<feature type="region of interest" description="G3" evidence="1">
    <location>
        <begin position="83"/>
        <end position="86"/>
    </location>
</feature>
<feature type="region of interest" description="G4" evidence="1">
    <location>
        <begin position="138"/>
        <end position="141"/>
    </location>
</feature>
<feature type="region of interest" description="G5" evidence="1">
    <location>
        <begin position="175"/>
        <end position="177"/>
    </location>
</feature>
<feature type="binding site" evidence="2">
    <location>
        <begin position="19"/>
        <end position="26"/>
    </location>
    <ligand>
        <name>GTP</name>
        <dbReference type="ChEBI" id="CHEBI:37565"/>
    </ligand>
</feature>
<feature type="binding site" evidence="2">
    <location>
        <position position="26"/>
    </location>
    <ligand>
        <name>Mg(2+)</name>
        <dbReference type="ChEBI" id="CHEBI:18420"/>
    </ligand>
</feature>
<feature type="binding site" evidence="2">
    <location>
        <begin position="83"/>
        <end position="87"/>
    </location>
    <ligand>
        <name>GTP</name>
        <dbReference type="ChEBI" id="CHEBI:37565"/>
    </ligand>
</feature>
<feature type="binding site" evidence="2">
    <location>
        <begin position="138"/>
        <end position="141"/>
    </location>
    <ligand>
        <name>GTP</name>
        <dbReference type="ChEBI" id="CHEBI:37565"/>
    </ligand>
</feature>
<dbReference type="EC" id="3.6.5.3" evidence="2"/>
<dbReference type="EMBL" id="BX248355">
    <property type="protein sequence ID" value="CAE48974.1"/>
    <property type="molecule type" value="Genomic_DNA"/>
</dbReference>
<dbReference type="RefSeq" id="WP_004566712.1">
    <property type="nucleotide sequence ID" value="NC_002935.2"/>
</dbReference>
<dbReference type="SMR" id="Q6NJD5"/>
<dbReference type="STRING" id="257309.DIP0470"/>
<dbReference type="GeneID" id="97331073"/>
<dbReference type="KEGG" id="cdi:DIP0470"/>
<dbReference type="HOGENOM" id="CLU_007265_0_1_11"/>
<dbReference type="Proteomes" id="UP000002198">
    <property type="component" value="Chromosome"/>
</dbReference>
<dbReference type="GO" id="GO:0005829">
    <property type="term" value="C:cytosol"/>
    <property type="evidence" value="ECO:0007669"/>
    <property type="project" value="TreeGrafter"/>
</dbReference>
<dbReference type="GO" id="GO:0005525">
    <property type="term" value="F:GTP binding"/>
    <property type="evidence" value="ECO:0007669"/>
    <property type="project" value="UniProtKB-UniRule"/>
</dbReference>
<dbReference type="GO" id="GO:0003924">
    <property type="term" value="F:GTPase activity"/>
    <property type="evidence" value="ECO:0007669"/>
    <property type="project" value="InterPro"/>
</dbReference>
<dbReference type="GO" id="GO:0003746">
    <property type="term" value="F:translation elongation factor activity"/>
    <property type="evidence" value="ECO:0007669"/>
    <property type="project" value="UniProtKB-UniRule"/>
</dbReference>
<dbReference type="CDD" id="cd01884">
    <property type="entry name" value="EF_Tu"/>
    <property type="match status" value="1"/>
</dbReference>
<dbReference type="CDD" id="cd03697">
    <property type="entry name" value="EFTU_II"/>
    <property type="match status" value="1"/>
</dbReference>
<dbReference type="CDD" id="cd03707">
    <property type="entry name" value="EFTU_III"/>
    <property type="match status" value="1"/>
</dbReference>
<dbReference type="FunFam" id="2.40.30.10:FF:000001">
    <property type="entry name" value="Elongation factor Tu"/>
    <property type="match status" value="1"/>
</dbReference>
<dbReference type="FunFam" id="3.40.50.300:FF:000003">
    <property type="entry name" value="Elongation factor Tu"/>
    <property type="match status" value="1"/>
</dbReference>
<dbReference type="Gene3D" id="3.40.50.300">
    <property type="entry name" value="P-loop containing nucleotide triphosphate hydrolases"/>
    <property type="match status" value="1"/>
</dbReference>
<dbReference type="Gene3D" id="2.40.30.10">
    <property type="entry name" value="Translation factors"/>
    <property type="match status" value="2"/>
</dbReference>
<dbReference type="HAMAP" id="MF_00118_B">
    <property type="entry name" value="EF_Tu_B"/>
    <property type="match status" value="1"/>
</dbReference>
<dbReference type="InterPro" id="IPR041709">
    <property type="entry name" value="EF-Tu_GTP-bd"/>
</dbReference>
<dbReference type="InterPro" id="IPR050055">
    <property type="entry name" value="EF-Tu_GTPase"/>
</dbReference>
<dbReference type="InterPro" id="IPR004161">
    <property type="entry name" value="EFTu-like_2"/>
</dbReference>
<dbReference type="InterPro" id="IPR033720">
    <property type="entry name" value="EFTU_2"/>
</dbReference>
<dbReference type="InterPro" id="IPR031157">
    <property type="entry name" value="G_TR_CS"/>
</dbReference>
<dbReference type="InterPro" id="IPR027417">
    <property type="entry name" value="P-loop_NTPase"/>
</dbReference>
<dbReference type="InterPro" id="IPR005225">
    <property type="entry name" value="Small_GTP-bd"/>
</dbReference>
<dbReference type="InterPro" id="IPR000795">
    <property type="entry name" value="T_Tr_GTP-bd_dom"/>
</dbReference>
<dbReference type="InterPro" id="IPR009000">
    <property type="entry name" value="Transl_B-barrel_sf"/>
</dbReference>
<dbReference type="InterPro" id="IPR009001">
    <property type="entry name" value="Transl_elong_EF1A/Init_IF2_C"/>
</dbReference>
<dbReference type="InterPro" id="IPR004541">
    <property type="entry name" value="Transl_elong_EFTu/EF1A_bac/org"/>
</dbReference>
<dbReference type="InterPro" id="IPR004160">
    <property type="entry name" value="Transl_elong_EFTu/EF1A_C"/>
</dbReference>
<dbReference type="NCBIfam" id="TIGR00485">
    <property type="entry name" value="EF-Tu"/>
    <property type="match status" value="1"/>
</dbReference>
<dbReference type="NCBIfam" id="NF000766">
    <property type="entry name" value="PRK00049.1"/>
    <property type="match status" value="1"/>
</dbReference>
<dbReference type="NCBIfam" id="NF009372">
    <property type="entry name" value="PRK12735.1"/>
    <property type="match status" value="1"/>
</dbReference>
<dbReference type="NCBIfam" id="NF009373">
    <property type="entry name" value="PRK12736.1"/>
    <property type="match status" value="1"/>
</dbReference>
<dbReference type="NCBIfam" id="TIGR00231">
    <property type="entry name" value="small_GTP"/>
    <property type="match status" value="1"/>
</dbReference>
<dbReference type="PANTHER" id="PTHR43721:SF22">
    <property type="entry name" value="ELONGATION FACTOR TU, MITOCHONDRIAL"/>
    <property type="match status" value="1"/>
</dbReference>
<dbReference type="PANTHER" id="PTHR43721">
    <property type="entry name" value="ELONGATION FACTOR TU-RELATED"/>
    <property type="match status" value="1"/>
</dbReference>
<dbReference type="Pfam" id="PF00009">
    <property type="entry name" value="GTP_EFTU"/>
    <property type="match status" value="1"/>
</dbReference>
<dbReference type="Pfam" id="PF03144">
    <property type="entry name" value="GTP_EFTU_D2"/>
    <property type="match status" value="1"/>
</dbReference>
<dbReference type="Pfam" id="PF03143">
    <property type="entry name" value="GTP_EFTU_D3"/>
    <property type="match status" value="1"/>
</dbReference>
<dbReference type="PRINTS" id="PR00315">
    <property type="entry name" value="ELONGATNFCT"/>
</dbReference>
<dbReference type="SUPFAM" id="SSF50465">
    <property type="entry name" value="EF-Tu/eEF-1alpha/eIF2-gamma C-terminal domain"/>
    <property type="match status" value="1"/>
</dbReference>
<dbReference type="SUPFAM" id="SSF52540">
    <property type="entry name" value="P-loop containing nucleoside triphosphate hydrolases"/>
    <property type="match status" value="1"/>
</dbReference>
<dbReference type="SUPFAM" id="SSF50447">
    <property type="entry name" value="Translation proteins"/>
    <property type="match status" value="1"/>
</dbReference>
<dbReference type="PROSITE" id="PS00301">
    <property type="entry name" value="G_TR_1"/>
    <property type="match status" value="1"/>
</dbReference>
<dbReference type="PROSITE" id="PS51722">
    <property type="entry name" value="G_TR_2"/>
    <property type="match status" value="1"/>
</dbReference>
<organism>
    <name type="scientific">Corynebacterium diphtheriae (strain ATCC 700971 / NCTC 13129 / Biotype gravis)</name>
    <dbReference type="NCBI Taxonomy" id="257309"/>
    <lineage>
        <taxon>Bacteria</taxon>
        <taxon>Bacillati</taxon>
        <taxon>Actinomycetota</taxon>
        <taxon>Actinomycetes</taxon>
        <taxon>Mycobacteriales</taxon>
        <taxon>Corynebacteriaceae</taxon>
        <taxon>Corynebacterium</taxon>
    </lineage>
</organism>
<evidence type="ECO:0000250" key="1"/>
<evidence type="ECO:0000255" key="2">
    <source>
        <dbReference type="HAMAP-Rule" id="MF_00118"/>
    </source>
</evidence>